<sequence length="149" mass="17308">MRMNKQIVVTDWIKEKPRLGTFLKLTLNSDERRILRGKRLTDCDQEIILQLPRGGKLNDGDILSTNDSNFYVEIIAKTESLIEISSKSKLELIKTAYHLGNRHVEVEIEKDILLTKGDYLIENMLKNFNVEIVNIQKKFFPERGAHSHE</sequence>
<organism>
    <name type="scientific">Prochlorococcus marinus (strain MIT 9215)</name>
    <dbReference type="NCBI Taxonomy" id="93060"/>
    <lineage>
        <taxon>Bacteria</taxon>
        <taxon>Bacillati</taxon>
        <taxon>Cyanobacteriota</taxon>
        <taxon>Cyanophyceae</taxon>
        <taxon>Synechococcales</taxon>
        <taxon>Prochlorococcaceae</taxon>
        <taxon>Prochlorococcus</taxon>
    </lineage>
</organism>
<accession>A8G4K5</accession>
<feature type="chain" id="PRO_1000062551" description="Urease accessory protein UreE">
    <location>
        <begin position="1"/>
        <end position="149"/>
    </location>
</feature>
<reference key="1">
    <citation type="journal article" date="2007" name="PLoS Genet.">
        <title>Patterns and implications of gene gain and loss in the evolution of Prochlorococcus.</title>
        <authorList>
            <person name="Kettler G.C."/>
            <person name="Martiny A.C."/>
            <person name="Huang K."/>
            <person name="Zucker J."/>
            <person name="Coleman M.L."/>
            <person name="Rodrigue S."/>
            <person name="Chen F."/>
            <person name="Lapidus A."/>
            <person name="Ferriera S."/>
            <person name="Johnson J."/>
            <person name="Steglich C."/>
            <person name="Church G.M."/>
            <person name="Richardson P."/>
            <person name="Chisholm S.W."/>
        </authorList>
    </citation>
    <scope>NUCLEOTIDE SEQUENCE [LARGE SCALE GENOMIC DNA]</scope>
    <source>
        <strain>MIT 9215</strain>
    </source>
</reference>
<comment type="function">
    <text evidence="1">Involved in urease metallocenter assembly. Binds nickel. Probably functions as a nickel donor during metallocenter assembly.</text>
</comment>
<comment type="subcellular location">
    <subcellularLocation>
        <location evidence="1">Cytoplasm</location>
    </subcellularLocation>
</comment>
<comment type="similarity">
    <text evidence="1">Belongs to the UreE family.</text>
</comment>
<protein>
    <recommendedName>
        <fullName evidence="1">Urease accessory protein UreE</fullName>
    </recommendedName>
</protein>
<evidence type="ECO:0000255" key="1">
    <source>
        <dbReference type="HAMAP-Rule" id="MF_00822"/>
    </source>
</evidence>
<keyword id="KW-0143">Chaperone</keyword>
<keyword id="KW-0963">Cytoplasm</keyword>
<keyword id="KW-0533">Nickel</keyword>
<keyword id="KW-0996">Nickel insertion</keyword>
<gene>
    <name evidence="1" type="primary">ureE</name>
    <name type="ordered locus">P9215_09211</name>
</gene>
<dbReference type="EMBL" id="CP000825">
    <property type="protein sequence ID" value="ABV50536.1"/>
    <property type="molecule type" value="Genomic_DNA"/>
</dbReference>
<dbReference type="RefSeq" id="WP_012007632.1">
    <property type="nucleotide sequence ID" value="NC_009840.1"/>
</dbReference>
<dbReference type="SMR" id="A8G4K5"/>
<dbReference type="STRING" id="93060.P9215_09211"/>
<dbReference type="KEGG" id="pmh:P9215_09211"/>
<dbReference type="eggNOG" id="COG2371">
    <property type="taxonomic scope" value="Bacteria"/>
</dbReference>
<dbReference type="HOGENOM" id="CLU_093757_2_0_3"/>
<dbReference type="OrthoDB" id="5421304at2"/>
<dbReference type="Proteomes" id="UP000002014">
    <property type="component" value="Chromosome"/>
</dbReference>
<dbReference type="GO" id="GO:0005737">
    <property type="term" value="C:cytoplasm"/>
    <property type="evidence" value="ECO:0007669"/>
    <property type="project" value="UniProtKB-SubCell"/>
</dbReference>
<dbReference type="GO" id="GO:0016151">
    <property type="term" value="F:nickel cation binding"/>
    <property type="evidence" value="ECO:0007669"/>
    <property type="project" value="UniProtKB-UniRule"/>
</dbReference>
<dbReference type="GO" id="GO:0051082">
    <property type="term" value="F:unfolded protein binding"/>
    <property type="evidence" value="ECO:0007669"/>
    <property type="project" value="UniProtKB-UniRule"/>
</dbReference>
<dbReference type="GO" id="GO:0006457">
    <property type="term" value="P:protein folding"/>
    <property type="evidence" value="ECO:0007669"/>
    <property type="project" value="InterPro"/>
</dbReference>
<dbReference type="GO" id="GO:0065003">
    <property type="term" value="P:protein-containing complex assembly"/>
    <property type="evidence" value="ECO:0007669"/>
    <property type="project" value="InterPro"/>
</dbReference>
<dbReference type="GO" id="GO:0019627">
    <property type="term" value="P:urea metabolic process"/>
    <property type="evidence" value="ECO:0007669"/>
    <property type="project" value="InterPro"/>
</dbReference>
<dbReference type="CDD" id="cd00571">
    <property type="entry name" value="UreE"/>
    <property type="match status" value="1"/>
</dbReference>
<dbReference type="Gene3D" id="2.60.260.20">
    <property type="entry name" value="Urease metallochaperone UreE, N-terminal domain"/>
    <property type="match status" value="1"/>
</dbReference>
<dbReference type="Gene3D" id="3.30.70.790">
    <property type="entry name" value="UreE, C-terminal domain"/>
    <property type="match status" value="1"/>
</dbReference>
<dbReference type="HAMAP" id="MF_00822">
    <property type="entry name" value="UreE"/>
    <property type="match status" value="1"/>
</dbReference>
<dbReference type="InterPro" id="IPR012406">
    <property type="entry name" value="UreE"/>
</dbReference>
<dbReference type="InterPro" id="IPR007864">
    <property type="entry name" value="UreE_C_dom"/>
</dbReference>
<dbReference type="InterPro" id="IPR004029">
    <property type="entry name" value="UreE_N"/>
</dbReference>
<dbReference type="InterPro" id="IPR036118">
    <property type="entry name" value="UreE_N_sf"/>
</dbReference>
<dbReference type="NCBIfam" id="NF009756">
    <property type="entry name" value="PRK13261.2-2"/>
    <property type="match status" value="1"/>
</dbReference>
<dbReference type="Pfam" id="PF05194">
    <property type="entry name" value="UreE_C"/>
    <property type="match status" value="1"/>
</dbReference>
<dbReference type="Pfam" id="PF02814">
    <property type="entry name" value="UreE_N"/>
    <property type="match status" value="1"/>
</dbReference>
<dbReference type="PIRSF" id="PIRSF036402">
    <property type="entry name" value="Ureas_acces_UreE"/>
    <property type="match status" value="1"/>
</dbReference>
<dbReference type="SMART" id="SM00988">
    <property type="entry name" value="UreE_N"/>
    <property type="match status" value="1"/>
</dbReference>
<dbReference type="SUPFAM" id="SSF69737">
    <property type="entry name" value="Urease metallochaperone UreE, C-terminal domain"/>
    <property type="match status" value="1"/>
</dbReference>
<dbReference type="SUPFAM" id="SSF69287">
    <property type="entry name" value="Urease metallochaperone UreE, N-terminal domain"/>
    <property type="match status" value="1"/>
</dbReference>
<proteinExistence type="inferred from homology"/>
<name>UREE_PROM2</name>